<comment type="function">
    <text evidence="1">Single strand DNA specific 5'exonuclease involved in mitochondrial DNA replication and recombination. Releases dinucleotides as main products of catalysis. Has the capacity to slide across 5'double-stranded DNA or 5'RNA sequences and resumes cutting two nucleotides downstream of the double-stranded-to-single-stranded junction or RNA-to-DNA junction, respectively (By similarity).</text>
</comment>
<comment type="cofactor">
    <cofactor evidence="1">
        <name>Mg(2+)</name>
        <dbReference type="ChEBI" id="CHEBI:18420"/>
    </cofactor>
</comment>
<comment type="cofactor">
    <cofactor evidence="1">
        <name>[4Fe-4S] cluster</name>
        <dbReference type="ChEBI" id="CHEBI:49883"/>
    </cofactor>
    <text evidence="1">Binds 1 [4Fe-4S] cluster.</text>
</comment>
<comment type="subunit">
    <text evidence="1">Monomer.</text>
</comment>
<comment type="subcellular location">
    <subcellularLocation>
        <location evidence="1">Mitochondrion</location>
    </subcellularLocation>
</comment>
<comment type="similarity">
    <text evidence="4">Belongs to the EXO5 family.</text>
</comment>
<name>EXO5_CANDC</name>
<accession>B9WLF5</accession>
<evidence type="ECO:0000250" key="1"/>
<evidence type="ECO:0000255" key="2"/>
<evidence type="ECO:0000256" key="3">
    <source>
        <dbReference type="SAM" id="MobiDB-lite"/>
    </source>
</evidence>
<evidence type="ECO:0000305" key="4"/>
<gene>
    <name type="primary">EXO5</name>
    <name type="synonym">DEM1</name>
    <name type="ORF">CD36_28710</name>
</gene>
<sequence length="624" mass="72071">MSRFWHFKKFYFSSCFSKQRMSRRIIKNELLVPMKVTSKHEQEQPITNDEPRSLLSEDANPSPDVESEPELESEQSENREDVHEIIRSMVLGTGTTLPRLSNDSLTGIYNYWKLNPNDDLPLYNPTKYTPFEFHSQYNQDRSYISTPRLSVTKLLVFSWCELRSFYQVYSGSVRLPSTQAMTQGTKLHSKLEAEIHPEIDTTEIEQFLLSNAMSLGELQKAVPIEEDKVVFYLGEVERLAVDWAEMLIERLFSLIMGAEAREILLHGYLNFNNRSFVTNKDEIRDPSSVLVSGIVDYVKLQNLTNPSDGTLFDDIHGFVDDNFDQVDNVPLVDLSKFLPEAKQILQHYDFRLTFTDVKTRSAPQIPRQESVLEAAKFQTFYYRHFFQLLSRDSRFTYFSLIENAERRGHDVDKPLSILTTICLLRKHYHILFKDFVRLANGEPIGFAPFDDSAKSMAYDFVSVFQSSDEFSLANPNHTHFFEQLREIDGIEYDSILSPLLKVWKTPPTLRYLAARASQLFGVFEENLGDVTSVEYRLNKTSQLLSENVYEYDFSEFQVEVESASKFWNGEREAVPTEDLSRCSFCEFQSKCMVAGGNTTEAVEKKTIGPKIRHFLNECESSSKG</sequence>
<protein>
    <recommendedName>
        <fullName>Exonuclease V, mitochondrial</fullName>
        <shortName>Exo V</shortName>
        <ecNumber>3.1.-.-</ecNumber>
    </recommendedName>
    <alternativeName>
        <fullName>Defects in morphology protein 1</fullName>
    </alternativeName>
</protein>
<feature type="transit peptide" description="Mitochondrion" evidence="2">
    <location>
        <begin position="1"/>
        <end position="61"/>
    </location>
</feature>
<feature type="chain" id="PRO_0000406685" description="Exonuclease V, mitochondrial">
    <location>
        <begin position="62"/>
        <end position="624"/>
    </location>
</feature>
<feature type="region of interest" description="Disordered" evidence="3">
    <location>
        <begin position="37"/>
        <end position="80"/>
    </location>
</feature>
<feature type="compositionally biased region" description="Acidic residues" evidence="3">
    <location>
        <begin position="65"/>
        <end position="75"/>
    </location>
</feature>
<feature type="binding site" evidence="1">
    <location>
        <position position="160"/>
    </location>
    <ligand>
        <name>[4Fe-4S] cluster</name>
        <dbReference type="ChEBI" id="CHEBI:49883"/>
    </ligand>
</feature>
<feature type="binding site" evidence="1">
    <location>
        <position position="582"/>
    </location>
    <ligand>
        <name>[4Fe-4S] cluster</name>
        <dbReference type="ChEBI" id="CHEBI:49883"/>
    </ligand>
</feature>
<feature type="binding site" evidence="1">
    <location>
        <position position="585"/>
    </location>
    <ligand>
        <name>[4Fe-4S] cluster</name>
        <dbReference type="ChEBI" id="CHEBI:49883"/>
    </ligand>
</feature>
<feature type="binding site" evidence="1">
    <location>
        <position position="591"/>
    </location>
    <ligand>
        <name>[4Fe-4S] cluster</name>
        <dbReference type="ChEBI" id="CHEBI:49883"/>
    </ligand>
</feature>
<organism>
    <name type="scientific">Candida dubliniensis (strain CD36 / ATCC MYA-646 / CBS 7987 / NCPF 3949 / NRRL Y-17841)</name>
    <name type="common">Yeast</name>
    <dbReference type="NCBI Taxonomy" id="573826"/>
    <lineage>
        <taxon>Eukaryota</taxon>
        <taxon>Fungi</taxon>
        <taxon>Dikarya</taxon>
        <taxon>Ascomycota</taxon>
        <taxon>Saccharomycotina</taxon>
        <taxon>Pichiomycetes</taxon>
        <taxon>Debaryomycetaceae</taxon>
        <taxon>Candida/Lodderomyces clade</taxon>
        <taxon>Candida</taxon>
    </lineage>
</organism>
<dbReference type="EC" id="3.1.-.-"/>
<dbReference type="EMBL" id="FM992695">
    <property type="protein sequence ID" value="CAX39916.1"/>
    <property type="molecule type" value="Genomic_DNA"/>
</dbReference>
<dbReference type="RefSeq" id="XP_002421916.1">
    <property type="nucleotide sequence ID" value="XM_002421871.1"/>
</dbReference>
<dbReference type="GeneID" id="8050229"/>
<dbReference type="KEGG" id="cdu:CD36_28710"/>
<dbReference type="CGD" id="CAL0000171417">
    <property type="gene designation" value="Cd36_28710"/>
</dbReference>
<dbReference type="VEuPathDB" id="FungiDB:CD36_28710"/>
<dbReference type="eggNOG" id="ENOG502QR0P">
    <property type="taxonomic scope" value="Eukaryota"/>
</dbReference>
<dbReference type="HOGENOM" id="CLU_019985_0_0_1"/>
<dbReference type="OrthoDB" id="354769at2759"/>
<dbReference type="Proteomes" id="UP000002605">
    <property type="component" value="Chromosome R"/>
</dbReference>
<dbReference type="GO" id="GO:0005739">
    <property type="term" value="C:mitochondrion"/>
    <property type="evidence" value="ECO:0007669"/>
    <property type="project" value="UniProtKB-SubCell"/>
</dbReference>
<dbReference type="GO" id="GO:0005634">
    <property type="term" value="C:nucleus"/>
    <property type="evidence" value="ECO:0007669"/>
    <property type="project" value="TreeGrafter"/>
</dbReference>
<dbReference type="GO" id="GO:0051539">
    <property type="term" value="F:4 iron, 4 sulfur cluster binding"/>
    <property type="evidence" value="ECO:0007669"/>
    <property type="project" value="UniProtKB-KW"/>
</dbReference>
<dbReference type="GO" id="GO:0003677">
    <property type="term" value="F:DNA binding"/>
    <property type="evidence" value="ECO:0007669"/>
    <property type="project" value="UniProtKB-KW"/>
</dbReference>
<dbReference type="GO" id="GO:0046872">
    <property type="term" value="F:metal ion binding"/>
    <property type="evidence" value="ECO:0007669"/>
    <property type="project" value="UniProtKB-KW"/>
</dbReference>
<dbReference type="GO" id="GO:0045145">
    <property type="term" value="F:single-stranded DNA 5'-3' DNA exonuclease activity"/>
    <property type="evidence" value="ECO:0007669"/>
    <property type="project" value="InterPro"/>
</dbReference>
<dbReference type="GO" id="GO:0036297">
    <property type="term" value="P:interstrand cross-link repair"/>
    <property type="evidence" value="ECO:0007669"/>
    <property type="project" value="TreeGrafter"/>
</dbReference>
<dbReference type="InterPro" id="IPR019190">
    <property type="entry name" value="EXOV"/>
</dbReference>
<dbReference type="PANTHER" id="PTHR14464">
    <property type="entry name" value="EXONUCLEASE V"/>
    <property type="match status" value="1"/>
</dbReference>
<dbReference type="PANTHER" id="PTHR14464:SF4">
    <property type="entry name" value="EXONUCLEASE V"/>
    <property type="match status" value="1"/>
</dbReference>
<dbReference type="Pfam" id="PF09810">
    <property type="entry name" value="Exo5"/>
    <property type="match status" value="1"/>
</dbReference>
<reference key="1">
    <citation type="journal article" date="2009" name="Genome Res.">
        <title>Comparative genomics of the fungal pathogens Candida dubliniensis and Candida albicans.</title>
        <authorList>
            <person name="Jackson A.P."/>
            <person name="Gamble J.A."/>
            <person name="Yeomans T."/>
            <person name="Moran G.P."/>
            <person name="Saunders D."/>
            <person name="Harris D."/>
            <person name="Aslett M."/>
            <person name="Barrell J.F."/>
            <person name="Butler G."/>
            <person name="Citiulo F."/>
            <person name="Coleman D.C."/>
            <person name="de Groot P.W.J."/>
            <person name="Goodwin T.J."/>
            <person name="Quail M.A."/>
            <person name="McQuillan J."/>
            <person name="Munro C.A."/>
            <person name="Pain A."/>
            <person name="Poulter R.T."/>
            <person name="Rajandream M.A."/>
            <person name="Renauld H."/>
            <person name="Spiering M.J."/>
            <person name="Tivey A."/>
            <person name="Gow N.A.R."/>
            <person name="Barrell B."/>
            <person name="Sullivan D.J."/>
            <person name="Berriman M."/>
        </authorList>
    </citation>
    <scope>NUCLEOTIDE SEQUENCE [LARGE SCALE GENOMIC DNA]</scope>
    <source>
        <strain>CD36 / ATCC MYA-646 / CBS 7987 / NCPF 3949 / NRRL Y-17841</strain>
    </source>
</reference>
<keyword id="KW-0004">4Fe-4S</keyword>
<keyword id="KW-0238">DNA-binding</keyword>
<keyword id="KW-0269">Exonuclease</keyword>
<keyword id="KW-0378">Hydrolase</keyword>
<keyword id="KW-0408">Iron</keyword>
<keyword id="KW-0411">Iron-sulfur</keyword>
<keyword id="KW-0460">Magnesium</keyword>
<keyword id="KW-0479">Metal-binding</keyword>
<keyword id="KW-0496">Mitochondrion</keyword>
<keyword id="KW-0540">Nuclease</keyword>
<keyword id="KW-0809">Transit peptide</keyword>
<proteinExistence type="inferred from homology"/>